<name>ALMA_ACIAD</name>
<comment type="function">
    <text evidence="4">Is able to catalyze the degradation of n-alkanes with C chain lengths of 32 and 36. Probably allows Acinetobacter baylyi strain ADP1 to grow on the long-chain n-alkane dotriacontane (C32H66) as a sole carbon source.</text>
</comment>
<comment type="cofactor">
    <cofactor evidence="2">
        <name>FAD</name>
        <dbReference type="ChEBI" id="CHEBI:57692"/>
    </cofactor>
    <text evidence="2">Binds 1 FAD per subunit.</text>
</comment>
<comment type="pathway">
    <text evidence="4">Hydrocarbon metabolism; alkane degradation.</text>
</comment>
<comment type="subcellular location">
    <subcellularLocation>
        <location evidence="3">Cell membrane</location>
        <topology evidence="3">Single-pass membrane protein</topology>
    </subcellularLocation>
</comment>
<comment type="similarity">
    <text evidence="5">Belongs to the FAD-binding monooxygenase family.</text>
</comment>
<keyword id="KW-1003">Cell membrane</keyword>
<keyword id="KW-0274">FAD</keyword>
<keyword id="KW-0285">Flavoprotein</keyword>
<keyword id="KW-0472">Membrane</keyword>
<keyword id="KW-0503">Monooxygenase</keyword>
<keyword id="KW-0521">NADP</keyword>
<keyword id="KW-0560">Oxidoreductase</keyword>
<keyword id="KW-0812">Transmembrane</keyword>
<keyword id="KW-1133">Transmembrane helix</keyword>
<accession>Q6F7T9</accession>
<feature type="chain" id="PRO_0000435700" description="Probable FAD-binding monooxygenase AlmA">
    <location>
        <begin position="1"/>
        <end position="498"/>
    </location>
</feature>
<feature type="transmembrane region" description="Helical" evidence="3">
    <location>
        <begin position="4"/>
        <end position="24"/>
    </location>
</feature>
<feature type="binding site" evidence="2">
    <location>
        <position position="15"/>
    </location>
    <ligand>
        <name>FAD</name>
        <dbReference type="ChEBI" id="CHEBI:57692"/>
    </ligand>
</feature>
<feature type="binding site" evidence="2">
    <location>
        <position position="36"/>
    </location>
    <ligand>
        <name>FAD</name>
        <dbReference type="ChEBI" id="CHEBI:57692"/>
    </ligand>
</feature>
<feature type="binding site" evidence="2">
    <location>
        <begin position="54"/>
        <end position="56"/>
    </location>
    <ligand>
        <name>NADP(+)</name>
        <dbReference type="ChEBI" id="CHEBI:58349"/>
    </ligand>
</feature>
<feature type="binding site" evidence="2">
    <location>
        <position position="56"/>
    </location>
    <ligand>
        <name>FAD</name>
        <dbReference type="ChEBI" id="CHEBI:57692"/>
    </ligand>
</feature>
<feature type="binding site" evidence="2">
    <location>
        <position position="62"/>
    </location>
    <ligand>
        <name>FAD</name>
        <dbReference type="ChEBI" id="CHEBI:57692"/>
    </ligand>
</feature>
<feature type="binding site" evidence="2">
    <location>
        <position position="104"/>
    </location>
    <ligand>
        <name>FAD</name>
        <dbReference type="ChEBI" id="CHEBI:57692"/>
    </ligand>
</feature>
<feature type="binding site" evidence="2">
    <location>
        <begin position="184"/>
        <end position="190"/>
    </location>
    <ligand>
        <name>NADP(+)</name>
        <dbReference type="ChEBI" id="CHEBI:58349"/>
    </ligand>
</feature>
<feature type="binding site" evidence="2">
    <location>
        <begin position="208"/>
        <end position="209"/>
    </location>
    <ligand>
        <name>NADP(+)</name>
        <dbReference type="ChEBI" id="CHEBI:58349"/>
    </ligand>
</feature>
<feature type="binding site" evidence="2">
    <location>
        <begin position="292"/>
        <end position="293"/>
    </location>
    <ligand>
        <name>NADP(+)</name>
        <dbReference type="ChEBI" id="CHEBI:58349"/>
    </ligand>
</feature>
<feature type="binding site" evidence="2">
    <location>
        <position position="395"/>
    </location>
    <ligand>
        <name>FAD</name>
        <dbReference type="ChEBI" id="CHEBI:57692"/>
    </ligand>
</feature>
<evidence type="ECO:0000250" key="1">
    <source>
        <dbReference type="UniProtKB" id="A5H9N6"/>
    </source>
</evidence>
<evidence type="ECO:0000250" key="2">
    <source>
        <dbReference type="UniProtKB" id="Q47PU3"/>
    </source>
</evidence>
<evidence type="ECO:0000255" key="3"/>
<evidence type="ECO:0000269" key="4">
    <source>
    </source>
</evidence>
<evidence type="ECO:0000305" key="5"/>
<evidence type="ECO:0000312" key="6">
    <source>
        <dbReference type="EMBL" id="CAG69876.1"/>
    </source>
</evidence>
<dbReference type="EC" id="1.14.13.-" evidence="5"/>
<dbReference type="EMBL" id="CR543861">
    <property type="protein sequence ID" value="CAG69876.1"/>
    <property type="molecule type" value="Genomic_DNA"/>
</dbReference>
<dbReference type="RefSeq" id="WP_004924170.1">
    <property type="nucleotide sequence ID" value="NC_005966.1"/>
</dbReference>
<dbReference type="SMR" id="Q6F7T9"/>
<dbReference type="STRING" id="202950.GCA_001485005_02963"/>
<dbReference type="GeneID" id="45235407"/>
<dbReference type="KEGG" id="aci:ACIAD3192"/>
<dbReference type="eggNOG" id="COG2072">
    <property type="taxonomic scope" value="Bacteria"/>
</dbReference>
<dbReference type="HOGENOM" id="CLU_032067_2_0_6"/>
<dbReference type="OrthoDB" id="312624at2"/>
<dbReference type="BioCyc" id="ASP62977:ACIAD_RS14460-MONOMER"/>
<dbReference type="UniPathway" id="UPA00191"/>
<dbReference type="Proteomes" id="UP000000430">
    <property type="component" value="Chromosome"/>
</dbReference>
<dbReference type="GO" id="GO:0005886">
    <property type="term" value="C:plasma membrane"/>
    <property type="evidence" value="ECO:0007669"/>
    <property type="project" value="UniProtKB-SubCell"/>
</dbReference>
<dbReference type="GO" id="GO:0050660">
    <property type="term" value="F:flavin adenine dinucleotide binding"/>
    <property type="evidence" value="ECO:0007669"/>
    <property type="project" value="InterPro"/>
</dbReference>
<dbReference type="GO" id="GO:0004499">
    <property type="term" value="F:N,N-dimethylaniline monooxygenase activity"/>
    <property type="evidence" value="ECO:0007669"/>
    <property type="project" value="InterPro"/>
</dbReference>
<dbReference type="GO" id="GO:0050661">
    <property type="term" value="F:NADP binding"/>
    <property type="evidence" value="ECO:0007669"/>
    <property type="project" value="InterPro"/>
</dbReference>
<dbReference type="GO" id="GO:0043448">
    <property type="term" value="P:alkane catabolic process"/>
    <property type="evidence" value="ECO:0000316"/>
    <property type="project" value="UniProtKB"/>
</dbReference>
<dbReference type="FunFam" id="3.50.50.60:FF:000213">
    <property type="entry name" value="FAD-containing monooxygenase EthA"/>
    <property type="match status" value="1"/>
</dbReference>
<dbReference type="FunFam" id="3.50.50.60:FF:000228">
    <property type="entry name" value="FAD-containing monooxygenase EthA"/>
    <property type="match status" value="1"/>
</dbReference>
<dbReference type="FunFam" id="3.50.50.60:FF:000191">
    <property type="entry name" value="Monooxygenase ethA"/>
    <property type="match status" value="1"/>
</dbReference>
<dbReference type="Gene3D" id="3.50.50.60">
    <property type="entry name" value="FAD/NAD(P)-binding domain"/>
    <property type="match status" value="3"/>
</dbReference>
<dbReference type="InterPro" id="IPR051820">
    <property type="entry name" value="FAD-binding_MO"/>
</dbReference>
<dbReference type="InterPro" id="IPR036188">
    <property type="entry name" value="FAD/NAD-bd_sf"/>
</dbReference>
<dbReference type="InterPro" id="IPR020946">
    <property type="entry name" value="Flavin_mOase-like"/>
</dbReference>
<dbReference type="PANTHER" id="PTHR43872">
    <property type="entry name" value="MONOOXYGENASE, PUTATIVE (AFU_ORTHOLOGUE AFUA_8G02570)-RELATED"/>
    <property type="match status" value="1"/>
</dbReference>
<dbReference type="PANTHER" id="PTHR43872:SF1">
    <property type="entry name" value="MONOOXYGENASE, PUTATIVE (AFU_ORTHOLOGUE AFUA_8G02570)-RELATED"/>
    <property type="match status" value="1"/>
</dbReference>
<dbReference type="Pfam" id="PF00743">
    <property type="entry name" value="FMO-like"/>
    <property type="match status" value="1"/>
</dbReference>
<dbReference type="SUPFAM" id="SSF51905">
    <property type="entry name" value="FAD/NAD(P)-binding domain"/>
    <property type="match status" value="1"/>
</dbReference>
<reference key="1">
    <citation type="journal article" date="2004" name="Nucleic Acids Res.">
        <title>Unique features revealed by the genome sequence of Acinetobacter sp. ADP1, a versatile and naturally transformation competent bacterium.</title>
        <authorList>
            <person name="Barbe V."/>
            <person name="Vallenet D."/>
            <person name="Fonknechten N."/>
            <person name="Kreimeyer A."/>
            <person name="Oztas S."/>
            <person name="Labarre L."/>
            <person name="Cruveiller S."/>
            <person name="Robert C."/>
            <person name="Duprat S."/>
            <person name="Wincker P."/>
            <person name="Ornston L.N."/>
            <person name="Weissenbach J."/>
            <person name="Marliere P."/>
            <person name="Cohen G.N."/>
            <person name="Medigue C."/>
        </authorList>
    </citation>
    <scope>NUCLEOTIDE SEQUENCE [LARGE SCALE GENOMIC DNA]</scope>
    <source>
        <strain>ATCC 33305 / BD413 / ADP1</strain>
    </source>
</reference>
<reference key="2">
    <citation type="journal article" date="2007" name="Appl. Environ. Microbiol.">
        <title>Identification of novel genes involved in long-chain n-alkane degradation by Acinetobacter sp. strain DSM 17874.</title>
        <authorList>
            <person name="Throne-Holst M."/>
            <person name="Wentzel A."/>
            <person name="Ellingsen T.E."/>
            <person name="Kotlar H.K."/>
            <person name="Zotchev S.B."/>
        </authorList>
    </citation>
    <scope>NUCLEOTIDE SEQUENCE [GENOMIC DNA]</scope>
    <scope>FUNCTION</scope>
    <scope>PATHWAY</scope>
    <source>
        <strain>ATCC 33305 / BD413 / ADP1</strain>
    </source>
</reference>
<proteinExistence type="inferred from homology"/>
<protein>
    <recommendedName>
        <fullName evidence="5">Probable FAD-binding monooxygenase AlmA</fullName>
        <ecNumber evidence="5">1.14.13.-</ecNumber>
    </recommendedName>
</protein>
<organism>
    <name type="scientific">Acinetobacter baylyi (strain ATCC 33305 / BD413 / ADP1)</name>
    <dbReference type="NCBI Taxonomy" id="62977"/>
    <lineage>
        <taxon>Bacteria</taxon>
        <taxon>Pseudomonadati</taxon>
        <taxon>Pseudomonadota</taxon>
        <taxon>Gammaproteobacteria</taxon>
        <taxon>Moraxellales</taxon>
        <taxon>Moraxellaceae</taxon>
        <taxon>Acinetobacter</taxon>
    </lineage>
</organism>
<gene>
    <name evidence="1" type="primary">almA</name>
    <name evidence="6" type="ordered locus">ACIAD3192</name>
</gene>
<sequence>MEKHIDILIVGAGISGIGIAAHLSKDAPQRQFEIIERRENIGGTWDLFRYPGIRSDSDMSTFGFNFKPWQSPNVLASGSSIKGYLSEVVDEYDLKKKIHFKHRVLAANYDTASKKWYVEIEDAAQKKQTWIANFIVGCTGYYNYDQGFEPDFPNKDAFKGQFIHPQHWPENLDYVGKKVVIIGSGATAITLVPAMSKGGAEHVTMLQRSPTYIASIPSIDFVYDKMRKVLPEDLAYKLTRARNIGVQRGIYTLSQKQPKLVRKFLLKSIEMQLKGKVDMKHFTPSYNPWDQRLCVVPDGDLFKILRSGQASVETDQIEKFTETGIQLKSGKHLDADIVVSATGLEIQILGGIKGTIDGQPLDTSKSMLYQGVMVSDVPNMAMIIGYINASWTLKVDVAADYICRLLNYMDKQGYDEVIPEGDQTELMEDTVMGSLTSGYIARAANVMPKQGKHAPWKVTNNYLADRKALKNARFDDGVLHFDKKTDTVERKTKPKLVS</sequence>